<reference key="1">
    <citation type="journal article" date="2011" name="J. Bacteriol.">
        <title>Comparative genomics of 28 Salmonella enterica isolates: evidence for CRISPR-mediated adaptive sublineage evolution.</title>
        <authorList>
            <person name="Fricke W.F."/>
            <person name="Mammel M.K."/>
            <person name="McDermott P.F."/>
            <person name="Tartera C."/>
            <person name="White D.G."/>
            <person name="Leclerc J.E."/>
            <person name="Ravel J."/>
            <person name="Cebula T.A."/>
        </authorList>
    </citation>
    <scope>NUCLEOTIDE SEQUENCE [LARGE SCALE GENOMIC DNA]</scope>
    <source>
        <strain>SL254</strain>
    </source>
</reference>
<comment type="similarity">
    <text evidence="1">Belongs to the UPF0301 (AlgH) family.</text>
</comment>
<gene>
    <name evidence="1" type="primary">yqgE</name>
    <name type="ordered locus">SNSL254_A3343</name>
</gene>
<evidence type="ECO:0000255" key="1">
    <source>
        <dbReference type="HAMAP-Rule" id="MF_00758"/>
    </source>
</evidence>
<sequence>MNLQHHFLIAMPALQDPIFRRSVVYICEHNQDGAMGIIINKPLENLQIEGILEKLKITPEPRDSAIRLDKAVMLGGPLAEDRGFILHTPPSRFASSIRISDNTVITTSRDVLETLGTQQQPSDVLVALGYASWDKGQLEQELLDNAWLTAPADLNILFKTPIAERWREAAKLIGIDILTMPGVAGHA</sequence>
<feature type="chain" id="PRO_1000198296" description="UPF0301 protein YqgE">
    <location>
        <begin position="1"/>
        <end position="187"/>
    </location>
</feature>
<protein>
    <recommendedName>
        <fullName evidence="1">UPF0301 protein YqgE</fullName>
    </recommendedName>
</protein>
<name>YQGE_SALNS</name>
<proteinExistence type="inferred from homology"/>
<organism>
    <name type="scientific">Salmonella newport (strain SL254)</name>
    <dbReference type="NCBI Taxonomy" id="423368"/>
    <lineage>
        <taxon>Bacteria</taxon>
        <taxon>Pseudomonadati</taxon>
        <taxon>Pseudomonadota</taxon>
        <taxon>Gammaproteobacteria</taxon>
        <taxon>Enterobacterales</taxon>
        <taxon>Enterobacteriaceae</taxon>
        <taxon>Salmonella</taxon>
    </lineage>
</organism>
<dbReference type="EMBL" id="CP001113">
    <property type="protein sequence ID" value="ACF61114.1"/>
    <property type="molecule type" value="Genomic_DNA"/>
</dbReference>
<dbReference type="RefSeq" id="WP_001053167.1">
    <property type="nucleotide sequence ID" value="NZ_CCMR01000001.1"/>
</dbReference>
<dbReference type="SMR" id="B4T5K3"/>
<dbReference type="KEGG" id="see:SNSL254_A3343"/>
<dbReference type="HOGENOM" id="CLU_057596_1_0_6"/>
<dbReference type="Proteomes" id="UP000008824">
    <property type="component" value="Chromosome"/>
</dbReference>
<dbReference type="GO" id="GO:0005829">
    <property type="term" value="C:cytosol"/>
    <property type="evidence" value="ECO:0007669"/>
    <property type="project" value="TreeGrafter"/>
</dbReference>
<dbReference type="FunFam" id="3.30.70.1300:FF:000001">
    <property type="entry name" value="UPF0301 protein YqgE"/>
    <property type="match status" value="1"/>
</dbReference>
<dbReference type="Gene3D" id="3.40.1740.10">
    <property type="entry name" value="VC0467-like"/>
    <property type="match status" value="1"/>
</dbReference>
<dbReference type="Gene3D" id="3.30.70.1300">
    <property type="entry name" value="VC0467-like domains"/>
    <property type="match status" value="1"/>
</dbReference>
<dbReference type="HAMAP" id="MF_00758">
    <property type="entry name" value="UPF0301"/>
    <property type="match status" value="1"/>
</dbReference>
<dbReference type="InterPro" id="IPR003774">
    <property type="entry name" value="AlgH-like"/>
</dbReference>
<dbReference type="NCBIfam" id="NF001266">
    <property type="entry name" value="PRK00228.1-1"/>
    <property type="match status" value="1"/>
</dbReference>
<dbReference type="PANTHER" id="PTHR30327">
    <property type="entry name" value="UNCHARACTERIZED PROTEIN YQGE"/>
    <property type="match status" value="1"/>
</dbReference>
<dbReference type="PANTHER" id="PTHR30327:SF1">
    <property type="entry name" value="UPF0301 PROTEIN YQGE"/>
    <property type="match status" value="1"/>
</dbReference>
<dbReference type="Pfam" id="PF02622">
    <property type="entry name" value="DUF179"/>
    <property type="match status" value="1"/>
</dbReference>
<dbReference type="SUPFAM" id="SSF143456">
    <property type="entry name" value="VC0467-like"/>
    <property type="match status" value="1"/>
</dbReference>
<accession>B4T5K3</accession>